<sequence length="91" mass="10919">MSRTIFCTFLQREADGQDFQLYPGELGKRIYNEISKEAWAQWQHKQTMLINEKKLSMMNPEHRKLLEQEMVQFLFEGKDVHIEGYTPPEKQ</sequence>
<comment type="function">
    <text evidence="1">Could be a mediator in iron transactions between iron acquisition and iron-requiring processes, such as synthesis and/or repair of Fe-S clusters in biosynthetic enzymes.</text>
</comment>
<comment type="subunit">
    <text evidence="1">Monomer.</text>
</comment>
<comment type="similarity">
    <text evidence="1">Belongs to the Fe(2+)-trafficking protein family.</text>
</comment>
<dbReference type="EMBL" id="CP000647">
    <property type="protein sequence ID" value="ABR78791.1"/>
    <property type="molecule type" value="Genomic_DNA"/>
</dbReference>
<dbReference type="RefSeq" id="WP_004105744.1">
    <property type="nucleotide sequence ID" value="NC_009648.1"/>
</dbReference>
<dbReference type="SMR" id="A6TDX0"/>
<dbReference type="STRING" id="272620.KPN_03394"/>
<dbReference type="jPOST" id="A6TDX0"/>
<dbReference type="PaxDb" id="272620-KPN_03394"/>
<dbReference type="EnsemblBacteria" id="ABR78791">
    <property type="protein sequence ID" value="ABR78791"/>
    <property type="gene ID" value="KPN_03394"/>
</dbReference>
<dbReference type="KEGG" id="kpn:KPN_03394"/>
<dbReference type="HOGENOM" id="CLU_170994_0_0_6"/>
<dbReference type="Proteomes" id="UP000000265">
    <property type="component" value="Chromosome"/>
</dbReference>
<dbReference type="GO" id="GO:0005829">
    <property type="term" value="C:cytosol"/>
    <property type="evidence" value="ECO:0007669"/>
    <property type="project" value="TreeGrafter"/>
</dbReference>
<dbReference type="GO" id="GO:0005506">
    <property type="term" value="F:iron ion binding"/>
    <property type="evidence" value="ECO:0007669"/>
    <property type="project" value="UniProtKB-UniRule"/>
</dbReference>
<dbReference type="GO" id="GO:0034599">
    <property type="term" value="P:cellular response to oxidative stress"/>
    <property type="evidence" value="ECO:0007669"/>
    <property type="project" value="TreeGrafter"/>
</dbReference>
<dbReference type="FunFam" id="1.10.3880.10:FF:000001">
    <property type="entry name" value="Probable Fe(2+)-trafficking protein"/>
    <property type="match status" value="1"/>
</dbReference>
<dbReference type="Gene3D" id="1.10.3880.10">
    <property type="entry name" value="Fe(II) trafficking protein YggX"/>
    <property type="match status" value="1"/>
</dbReference>
<dbReference type="HAMAP" id="MF_00686">
    <property type="entry name" value="Fe_traffic_YggX"/>
    <property type="match status" value="1"/>
</dbReference>
<dbReference type="InterPro" id="IPR007457">
    <property type="entry name" value="Fe_traffick_prot_YggX"/>
</dbReference>
<dbReference type="InterPro" id="IPR036766">
    <property type="entry name" value="Fe_traffick_prot_YggX_sf"/>
</dbReference>
<dbReference type="NCBIfam" id="NF003817">
    <property type="entry name" value="PRK05408.1"/>
    <property type="match status" value="1"/>
</dbReference>
<dbReference type="PANTHER" id="PTHR36965">
    <property type="entry name" value="FE(2+)-TRAFFICKING PROTEIN-RELATED"/>
    <property type="match status" value="1"/>
</dbReference>
<dbReference type="PANTHER" id="PTHR36965:SF1">
    <property type="entry name" value="FE(2+)-TRAFFICKING PROTEIN-RELATED"/>
    <property type="match status" value="1"/>
</dbReference>
<dbReference type="Pfam" id="PF04362">
    <property type="entry name" value="Iron_traffic"/>
    <property type="match status" value="1"/>
</dbReference>
<dbReference type="PIRSF" id="PIRSF029827">
    <property type="entry name" value="Fe_traffic_YggX"/>
    <property type="match status" value="1"/>
</dbReference>
<dbReference type="SUPFAM" id="SSF111148">
    <property type="entry name" value="YggX-like"/>
    <property type="match status" value="1"/>
</dbReference>
<evidence type="ECO:0000255" key="1">
    <source>
        <dbReference type="HAMAP-Rule" id="MF_00686"/>
    </source>
</evidence>
<keyword id="KW-0408">Iron</keyword>
<protein>
    <recommendedName>
        <fullName evidence="1">Probable Fe(2+)-trafficking protein</fullName>
    </recommendedName>
</protein>
<accession>A6TDX0</accession>
<feature type="chain" id="PRO_1000045043" description="Probable Fe(2+)-trafficking protein">
    <location>
        <begin position="1"/>
        <end position="91"/>
    </location>
</feature>
<proteinExistence type="inferred from homology"/>
<name>FETP_KLEP7</name>
<reference key="1">
    <citation type="submission" date="2006-09" db="EMBL/GenBank/DDBJ databases">
        <authorList>
            <consortium name="The Klebsiella pneumonia Genome Sequencing Project"/>
            <person name="McClelland M."/>
            <person name="Sanderson E.K."/>
            <person name="Spieth J."/>
            <person name="Clifton W.S."/>
            <person name="Latreille P."/>
            <person name="Sabo A."/>
            <person name="Pepin K."/>
            <person name="Bhonagiri V."/>
            <person name="Porwollik S."/>
            <person name="Ali J."/>
            <person name="Wilson R.K."/>
        </authorList>
    </citation>
    <scope>NUCLEOTIDE SEQUENCE [LARGE SCALE GENOMIC DNA]</scope>
    <source>
        <strain>ATCC 700721 / MGH 78578</strain>
    </source>
</reference>
<organism>
    <name type="scientific">Klebsiella pneumoniae subsp. pneumoniae (strain ATCC 700721 / MGH 78578)</name>
    <dbReference type="NCBI Taxonomy" id="272620"/>
    <lineage>
        <taxon>Bacteria</taxon>
        <taxon>Pseudomonadati</taxon>
        <taxon>Pseudomonadota</taxon>
        <taxon>Gammaproteobacteria</taxon>
        <taxon>Enterobacterales</taxon>
        <taxon>Enterobacteriaceae</taxon>
        <taxon>Klebsiella/Raoultella group</taxon>
        <taxon>Klebsiella</taxon>
        <taxon>Klebsiella pneumoniae complex</taxon>
    </lineage>
</organism>
<gene>
    <name type="ordered locus">KPN78578_33300</name>
    <name type="ORF">KPN_03394</name>
</gene>